<proteinExistence type="inferred from homology"/>
<evidence type="ECO:0000255" key="1">
    <source>
        <dbReference type="HAMAP-Rule" id="MF_00270"/>
    </source>
</evidence>
<evidence type="ECO:0000305" key="2"/>
<name>RS18_PELUB</name>
<sequence length="92" mass="10481">MPSKKRAGNKKKGSQSNFAKLSIFQPNKYKFKKTCPLSAKGAPEVDYKNIRLLKKYMSENGKILPSRITNVSQKKQRELSLSIKRARNLALI</sequence>
<dbReference type="EMBL" id="CP000084">
    <property type="protein sequence ID" value="AAZ21523.1"/>
    <property type="molecule type" value="Genomic_DNA"/>
</dbReference>
<dbReference type="SMR" id="Q4FMR6"/>
<dbReference type="STRING" id="335992.SAR11_0704"/>
<dbReference type="KEGG" id="pub:SAR11_0704"/>
<dbReference type="eggNOG" id="COG0238">
    <property type="taxonomic scope" value="Bacteria"/>
</dbReference>
<dbReference type="HOGENOM" id="CLU_148710_2_1_5"/>
<dbReference type="Proteomes" id="UP000002528">
    <property type="component" value="Chromosome"/>
</dbReference>
<dbReference type="GO" id="GO:0022627">
    <property type="term" value="C:cytosolic small ribosomal subunit"/>
    <property type="evidence" value="ECO:0007669"/>
    <property type="project" value="TreeGrafter"/>
</dbReference>
<dbReference type="GO" id="GO:0070181">
    <property type="term" value="F:small ribosomal subunit rRNA binding"/>
    <property type="evidence" value="ECO:0007669"/>
    <property type="project" value="TreeGrafter"/>
</dbReference>
<dbReference type="GO" id="GO:0003735">
    <property type="term" value="F:structural constituent of ribosome"/>
    <property type="evidence" value="ECO:0007669"/>
    <property type="project" value="InterPro"/>
</dbReference>
<dbReference type="GO" id="GO:0006412">
    <property type="term" value="P:translation"/>
    <property type="evidence" value="ECO:0007669"/>
    <property type="project" value="UniProtKB-UniRule"/>
</dbReference>
<dbReference type="Gene3D" id="4.10.640.10">
    <property type="entry name" value="Ribosomal protein S18"/>
    <property type="match status" value="1"/>
</dbReference>
<dbReference type="HAMAP" id="MF_00270">
    <property type="entry name" value="Ribosomal_bS18"/>
    <property type="match status" value="1"/>
</dbReference>
<dbReference type="InterPro" id="IPR001648">
    <property type="entry name" value="Ribosomal_bS18"/>
</dbReference>
<dbReference type="InterPro" id="IPR018275">
    <property type="entry name" value="Ribosomal_bS18_CS"/>
</dbReference>
<dbReference type="InterPro" id="IPR036870">
    <property type="entry name" value="Ribosomal_bS18_sf"/>
</dbReference>
<dbReference type="NCBIfam" id="TIGR00165">
    <property type="entry name" value="S18"/>
    <property type="match status" value="1"/>
</dbReference>
<dbReference type="PANTHER" id="PTHR13479">
    <property type="entry name" value="30S RIBOSOMAL PROTEIN S18"/>
    <property type="match status" value="1"/>
</dbReference>
<dbReference type="PANTHER" id="PTHR13479:SF40">
    <property type="entry name" value="SMALL RIBOSOMAL SUBUNIT PROTEIN BS18M"/>
    <property type="match status" value="1"/>
</dbReference>
<dbReference type="Pfam" id="PF01084">
    <property type="entry name" value="Ribosomal_S18"/>
    <property type="match status" value="1"/>
</dbReference>
<dbReference type="PRINTS" id="PR00974">
    <property type="entry name" value="RIBOSOMALS18"/>
</dbReference>
<dbReference type="SUPFAM" id="SSF46911">
    <property type="entry name" value="Ribosomal protein S18"/>
    <property type="match status" value="1"/>
</dbReference>
<dbReference type="PROSITE" id="PS00057">
    <property type="entry name" value="RIBOSOMAL_S18"/>
    <property type="match status" value="1"/>
</dbReference>
<feature type="chain" id="PRO_0000345523" description="Small ribosomal subunit protein bS18">
    <location>
        <begin position="1"/>
        <end position="92"/>
    </location>
</feature>
<accession>Q4FMR6</accession>
<reference key="1">
    <citation type="journal article" date="2005" name="Science">
        <title>Genome streamlining in a cosmopolitan oceanic bacterium.</title>
        <authorList>
            <person name="Giovannoni S.J."/>
            <person name="Tripp H.J."/>
            <person name="Givan S."/>
            <person name="Podar M."/>
            <person name="Vergin K.L."/>
            <person name="Baptista D."/>
            <person name="Bibbs L."/>
            <person name="Eads J."/>
            <person name="Richardson T.H."/>
            <person name="Noordewier M."/>
            <person name="Rappe M.S."/>
            <person name="Short J.M."/>
            <person name="Carrington J.C."/>
            <person name="Mathur E.J."/>
        </authorList>
    </citation>
    <scope>NUCLEOTIDE SEQUENCE [LARGE SCALE GENOMIC DNA]</scope>
    <source>
        <strain>HTCC1062</strain>
    </source>
</reference>
<organism>
    <name type="scientific">Pelagibacter ubique (strain HTCC1062)</name>
    <dbReference type="NCBI Taxonomy" id="335992"/>
    <lineage>
        <taxon>Bacteria</taxon>
        <taxon>Pseudomonadati</taxon>
        <taxon>Pseudomonadota</taxon>
        <taxon>Alphaproteobacteria</taxon>
        <taxon>Candidatus Pelagibacterales</taxon>
        <taxon>Candidatus Pelagibacteraceae</taxon>
        <taxon>Candidatus Pelagibacter</taxon>
    </lineage>
</organism>
<protein>
    <recommendedName>
        <fullName evidence="1">Small ribosomal subunit protein bS18</fullName>
    </recommendedName>
    <alternativeName>
        <fullName evidence="2">30S ribosomal protein S18</fullName>
    </alternativeName>
</protein>
<comment type="function">
    <text evidence="1">Binds as a heterodimer with protein bS6 to the central domain of the 16S rRNA, where it helps stabilize the platform of the 30S subunit.</text>
</comment>
<comment type="subunit">
    <text evidence="1">Part of the 30S ribosomal subunit. Forms a tight heterodimer with protein bS6.</text>
</comment>
<comment type="similarity">
    <text evidence="1">Belongs to the bacterial ribosomal protein bS18 family.</text>
</comment>
<gene>
    <name evidence="1" type="primary">rpsR</name>
    <name type="ordered locus">SAR11_0704</name>
</gene>
<keyword id="KW-1185">Reference proteome</keyword>
<keyword id="KW-0687">Ribonucleoprotein</keyword>
<keyword id="KW-0689">Ribosomal protein</keyword>
<keyword id="KW-0694">RNA-binding</keyword>
<keyword id="KW-0699">rRNA-binding</keyword>